<evidence type="ECO:0000250" key="1"/>
<evidence type="ECO:0000250" key="2">
    <source>
        <dbReference type="UniProtKB" id="Q9H461"/>
    </source>
</evidence>
<evidence type="ECO:0000255" key="3"/>
<evidence type="ECO:0000255" key="4">
    <source>
        <dbReference type="PROSITE-ProRule" id="PRU00090"/>
    </source>
</evidence>
<evidence type="ECO:0000256" key="5">
    <source>
        <dbReference type="SAM" id="MobiDB-lite"/>
    </source>
</evidence>
<evidence type="ECO:0000305" key="6"/>
<name>FZD8_RAT</name>
<protein>
    <recommendedName>
        <fullName>Frizzled-8</fullName>
        <shortName>Fz-8</shortName>
    </recommendedName>
</protein>
<organism>
    <name type="scientific">Rattus norvegicus</name>
    <name type="common">Rat</name>
    <dbReference type="NCBI Taxonomy" id="10116"/>
    <lineage>
        <taxon>Eukaryota</taxon>
        <taxon>Metazoa</taxon>
        <taxon>Chordata</taxon>
        <taxon>Craniata</taxon>
        <taxon>Vertebrata</taxon>
        <taxon>Euteleostomi</taxon>
        <taxon>Mammalia</taxon>
        <taxon>Eutheria</taxon>
        <taxon>Euarchontoglires</taxon>
        <taxon>Glires</taxon>
        <taxon>Rodentia</taxon>
        <taxon>Myomorpha</taxon>
        <taxon>Muroidea</taxon>
        <taxon>Muridae</taxon>
        <taxon>Murinae</taxon>
        <taxon>Rattus</taxon>
    </lineage>
</organism>
<reference key="1">
    <citation type="journal article" date="2004" name="Genome Res.">
        <title>The status, quality, and expansion of the NIH full-length cDNA project: the Mammalian Gene Collection (MGC).</title>
        <authorList>
            <consortium name="The MGC Project Team"/>
        </authorList>
    </citation>
    <scope>NUCLEOTIDE SEQUENCE [LARGE SCALE MRNA]</scope>
    <source>
        <tissue>Liver</tissue>
    </source>
</reference>
<gene>
    <name type="primary">Fzd8</name>
</gene>
<sequence length="684" mass="73009">MEWGYLLEVTSLLAALAVLQRSSGAAAASAKELACQEITVPLCKGIGYNYTYMPNQFNHDTQDEAGLEVHQFWPLVEIQCSPDLKFFLCSMYTPICLEDYKKPLPPCRSVCERAKAGCAPLMRQYGFAWPDRMRCDRLPEQGNPDTLCMDYNRTDLTTAAPSPPRRLPPPQPGEQPPSGSGHSRPPGARPPHRGGSSRGSGDTAAAPPSRGGKARPPGGGAAPCEPGCQCRAPMVSVSSERHPLYNRVKTGQIANCALPCHNPFFSQDERAFTVFWIGLWSVLCFVSTFATVSTFLIDMERFKYPERPIIFLSACYLFVSVGYLVRLVAGHEKVACSGGAPGAGGAGGAGGAATAGAGAAGAGASSPGARGEYEELGAVEQHVRYETTGPALCTVVFLLVYFFGMASSIWWVILSLTWFLAAGMKWGNEAIAGYSQYFHLAAWLVPSVKSIAVLALSSVDGDPVAGICYVGNQSLDNLRGFVLAPLVIYLFIGTMFLLAGFVSLFRIRSVIKQQGGPTKTHKLEKLMIRLGLFTVLYTVPAAVVVACLFYEQHNRPRWEATHNCPCLRDLQPDQARRPDYAVFMLKYFMCLVVGITSGVWVWSGKTLESWRALCTRCCWASKGAAVGAGAGGSGPGGGGPGPGGGGGHGGGGGSLYSDVSTGLTWRSGTASSVSYPKQMPLSQV</sequence>
<comment type="function">
    <text evidence="1">Receptor for Wnt proteins. Component of the Wnt-Fzd-LRP5-LRP6 complex that triggers beta-catenin signaling through inducing aggregation of receptor-ligand complexes into ribosome-sized signalosomes. The beta-catenin canonical signaling pathway leads to the activation of disheveled proteins, inhibition of GSK-3 kinase, nuclear accumulation of beta-catenin and activation of Wnt target genes. A second signaling pathway involving PKC and calcium fluxes has been seen for some family members, but it is not yet clear if it represents a distinct pathway or if it can be integrated in the canonical pathway, as PKC seems to be required for Wnt-mediated inactivation of GSK-3 kinase. Both pathways seem to involve interactions with G-proteins. May be involved in transduction and intercellular transmission of polarity information during tissue morphogenesis and/or in differentiated tissues. Coreceptor along with RYK of Wnt proteins, such as WNT1 (By similarity).</text>
</comment>
<comment type="subunit">
    <text evidence="1 2">Component of a Wnt-signaling complex that contains a WNT protein, a FZD protein and LRP5 or LRP6. Interacts directly with LRP5 or LRP6; the interaction is promoted by Wnt-binding and signaling and inhibited by DKK1. Interacts (via the PDZ-binding motif) with GPOC (via its PDZ domain). Interacts with RSPO1 and RSPO3 (By similarity). Interacts with glypican GPC3 (By similarity).</text>
</comment>
<comment type="subcellular location">
    <subcellularLocation>
        <location>Membrane</location>
        <topology>Multi-pass membrane protein</topology>
    </subcellularLocation>
    <subcellularLocation>
        <location evidence="1">Golgi apparatus</location>
    </subcellularLocation>
    <subcellularLocation>
        <location evidence="1">Cell membrane</location>
        <topology evidence="1">Multi-pass membrane protein</topology>
    </subcellularLocation>
    <text evidence="1">Colocalizes with GOPC at the Golgi apparatus.</text>
</comment>
<comment type="domain">
    <text evidence="1">Lys-Thr-X-X-X-Trp motif interacts with the PDZ domain of Dvl (Disheveled) family members and is involved in the activation of the Wnt/beta-catenin signaling pathway.</text>
</comment>
<comment type="domain">
    <text evidence="1">The FZ domain is involved in binding with Wnt ligands.</text>
</comment>
<comment type="PTM">
    <text evidence="1">Ubiquitinated by ZNRF3, leading to its degradation by the proteasome.</text>
</comment>
<comment type="similarity">
    <text evidence="6">Belongs to the G-protein coupled receptor Fz/Smo family.</text>
</comment>
<proteinExistence type="evidence at transcript level"/>
<keyword id="KW-1003">Cell membrane</keyword>
<keyword id="KW-0217">Developmental protein</keyword>
<keyword id="KW-1015">Disulfide bond</keyword>
<keyword id="KW-0297">G-protein coupled receptor</keyword>
<keyword id="KW-0325">Glycoprotein</keyword>
<keyword id="KW-0333">Golgi apparatus</keyword>
<keyword id="KW-0472">Membrane</keyword>
<keyword id="KW-0675">Receptor</keyword>
<keyword id="KW-1185">Reference proteome</keyword>
<keyword id="KW-0732">Signal</keyword>
<keyword id="KW-0807">Transducer</keyword>
<keyword id="KW-0812">Transmembrane</keyword>
<keyword id="KW-1133">Transmembrane helix</keyword>
<keyword id="KW-0832">Ubl conjugation</keyword>
<keyword id="KW-0879">Wnt signaling pathway</keyword>
<accession>Q498S8</accession>
<feature type="signal peptide" evidence="3">
    <location>
        <begin position="1"/>
        <end position="27"/>
    </location>
</feature>
<feature type="chain" id="PRO_0000278650" description="Frizzled-8">
    <location>
        <begin position="28"/>
        <end position="684"/>
    </location>
</feature>
<feature type="topological domain" description="Extracellular" evidence="3">
    <location>
        <begin position="28"/>
        <end position="271"/>
    </location>
</feature>
<feature type="transmembrane region" description="Helical; Name=1" evidence="3">
    <location>
        <begin position="272"/>
        <end position="292"/>
    </location>
</feature>
<feature type="topological domain" description="Cytoplasmic" evidence="3">
    <location>
        <begin position="293"/>
        <end position="308"/>
    </location>
</feature>
<feature type="transmembrane region" description="Helical; Name=2" evidence="3">
    <location>
        <begin position="309"/>
        <end position="329"/>
    </location>
</feature>
<feature type="topological domain" description="Extracellular" evidence="3">
    <location>
        <begin position="330"/>
        <end position="393"/>
    </location>
</feature>
<feature type="transmembrane region" description="Helical; Name=3" evidence="3">
    <location>
        <begin position="394"/>
        <end position="414"/>
    </location>
</feature>
<feature type="topological domain" description="Cytoplasmic" evidence="3">
    <location>
        <begin position="415"/>
        <end position="436"/>
    </location>
</feature>
<feature type="transmembrane region" description="Helical; Name=4" evidence="3">
    <location>
        <begin position="437"/>
        <end position="457"/>
    </location>
</feature>
<feature type="topological domain" description="Extracellular" evidence="3">
    <location>
        <begin position="458"/>
        <end position="480"/>
    </location>
</feature>
<feature type="transmembrane region" description="Helical; Name=5" evidence="3">
    <location>
        <begin position="481"/>
        <end position="501"/>
    </location>
</feature>
<feature type="topological domain" description="Cytoplasmic" evidence="3">
    <location>
        <begin position="502"/>
        <end position="529"/>
    </location>
</feature>
<feature type="transmembrane region" description="Helical; Name=6" evidence="3">
    <location>
        <begin position="530"/>
        <end position="550"/>
    </location>
</feature>
<feature type="topological domain" description="Extracellular" evidence="3">
    <location>
        <begin position="551"/>
        <end position="581"/>
    </location>
</feature>
<feature type="transmembrane region" description="Helical; Name=7" evidence="3">
    <location>
        <begin position="582"/>
        <end position="602"/>
    </location>
</feature>
<feature type="topological domain" description="Cytoplasmic" evidence="3">
    <location>
        <begin position="603"/>
        <end position="684"/>
    </location>
</feature>
<feature type="domain" description="FZ" evidence="4">
    <location>
        <begin position="30"/>
        <end position="151"/>
    </location>
</feature>
<feature type="region of interest" description="Wnt-binding" evidence="1">
    <location>
        <begin position="95"/>
        <end position="100"/>
    </location>
</feature>
<feature type="region of interest" description="Wnt-binding" evidence="1">
    <location>
        <begin position="147"/>
        <end position="152"/>
    </location>
</feature>
<feature type="region of interest" description="Disordered" evidence="5">
    <location>
        <begin position="155"/>
        <end position="222"/>
    </location>
</feature>
<feature type="region of interest" description="Disordered" evidence="5">
    <location>
        <begin position="630"/>
        <end position="655"/>
    </location>
</feature>
<feature type="short sequence motif" description="Lys-Thr-X-X-X-Trp motif, mediates interaction with the PDZ domain of Dvl family members" evidence="1">
    <location>
        <begin position="605"/>
        <end position="610"/>
    </location>
</feature>
<feature type="short sequence motif" description="PDZ-binding" evidence="1">
    <location>
        <begin position="682"/>
        <end position="684"/>
    </location>
</feature>
<feature type="compositionally biased region" description="Pro residues" evidence="5">
    <location>
        <begin position="161"/>
        <end position="175"/>
    </location>
</feature>
<feature type="compositionally biased region" description="Low complexity" evidence="5">
    <location>
        <begin position="176"/>
        <end position="186"/>
    </location>
</feature>
<feature type="compositionally biased region" description="Low complexity" evidence="5">
    <location>
        <begin position="199"/>
        <end position="222"/>
    </location>
</feature>
<feature type="compositionally biased region" description="Gly residues" evidence="5">
    <location>
        <begin position="630"/>
        <end position="654"/>
    </location>
</feature>
<feature type="binding site" evidence="1">
    <location>
        <begin position="71"/>
        <end position="78"/>
    </location>
    <ligand>
        <name>hexadecanoate</name>
        <dbReference type="ChEBI" id="CHEBI:7896"/>
    </ligand>
</feature>
<feature type="glycosylation site" description="N-linked (GlcNAc...) asparagine" evidence="3">
    <location>
        <position position="49"/>
    </location>
</feature>
<feature type="glycosylation site" description="N-linked (GlcNAc...) asparagine" evidence="3">
    <location>
        <position position="152"/>
    </location>
</feature>
<feature type="glycosylation site" description="N-linked (GlcNAc...) asparagine" evidence="3">
    <location>
        <position position="472"/>
    </location>
</feature>
<feature type="disulfide bond" evidence="4">
    <location>
        <begin position="35"/>
        <end position="96"/>
    </location>
</feature>
<feature type="disulfide bond" evidence="4">
    <location>
        <begin position="43"/>
        <end position="89"/>
    </location>
</feature>
<feature type="disulfide bond" evidence="4">
    <location>
        <begin position="80"/>
        <end position="118"/>
    </location>
</feature>
<feature type="disulfide bond" evidence="4">
    <location>
        <begin position="107"/>
        <end position="148"/>
    </location>
</feature>
<feature type="disulfide bond" evidence="4">
    <location>
        <begin position="111"/>
        <end position="135"/>
    </location>
</feature>
<dbReference type="EMBL" id="BC100088">
    <property type="protein sequence ID" value="AAI00089.1"/>
    <property type="molecule type" value="mRNA"/>
</dbReference>
<dbReference type="RefSeq" id="NP_001037716.1">
    <property type="nucleotide sequence ID" value="NM_001044251.2"/>
</dbReference>
<dbReference type="RefSeq" id="XP_003751769.1">
    <property type="nucleotide sequence ID" value="XM_003751721.4"/>
</dbReference>
<dbReference type="RefSeq" id="XP_006254204.1">
    <property type="nucleotide sequence ID" value="XM_006254142.5"/>
</dbReference>
<dbReference type="SMR" id="Q498S8"/>
<dbReference type="FunCoup" id="Q498S8">
    <property type="interactions" value="1025"/>
</dbReference>
<dbReference type="STRING" id="10116.ENSRNOP00000055627"/>
<dbReference type="GlyCosmos" id="Q498S8">
    <property type="glycosylation" value="3 sites, No reported glycans"/>
</dbReference>
<dbReference type="GlyGen" id="Q498S8">
    <property type="glycosylation" value="3 sites"/>
</dbReference>
<dbReference type="PhosphoSitePlus" id="Q498S8"/>
<dbReference type="PaxDb" id="10116-ENSRNOP00000055627"/>
<dbReference type="Ensembl" id="ENSRNOT00000116071.1">
    <property type="protein sequence ID" value="ENSRNOP00000093389.1"/>
    <property type="gene ID" value="ENSRNOG00000069521.1"/>
</dbReference>
<dbReference type="GeneID" id="364754"/>
<dbReference type="KEGG" id="rno:364754"/>
<dbReference type="UCSC" id="RGD:1560525">
    <property type="organism name" value="rat"/>
</dbReference>
<dbReference type="AGR" id="RGD:1560525"/>
<dbReference type="CTD" id="8325"/>
<dbReference type="RGD" id="1560525">
    <property type="gene designation" value="Fzd8"/>
</dbReference>
<dbReference type="eggNOG" id="KOG3577">
    <property type="taxonomic scope" value="Eukaryota"/>
</dbReference>
<dbReference type="GeneTree" id="ENSGT00940000161191"/>
<dbReference type="HOGENOM" id="CLU_007873_2_0_1"/>
<dbReference type="InParanoid" id="Q498S8"/>
<dbReference type="OMA" id="LPCHNPY"/>
<dbReference type="OrthoDB" id="10053709at2759"/>
<dbReference type="PhylomeDB" id="Q498S8"/>
<dbReference type="TreeFam" id="TF317907"/>
<dbReference type="Reactome" id="R-RNO-4608870">
    <property type="pathway name" value="Asymmetric localization of PCP proteins"/>
</dbReference>
<dbReference type="Reactome" id="R-RNO-4641263">
    <property type="pathway name" value="Regulation of FZD by ubiquitination"/>
</dbReference>
<dbReference type="PRO" id="PR:Q498S8"/>
<dbReference type="Proteomes" id="UP000002494">
    <property type="component" value="Chromosome 17"/>
</dbReference>
<dbReference type="Bgee" id="ENSRNOG00000059244">
    <property type="expression patterns" value="Expressed in liver and 17 other cell types or tissues"/>
</dbReference>
<dbReference type="GO" id="GO:0005794">
    <property type="term" value="C:Golgi apparatus"/>
    <property type="evidence" value="ECO:0007669"/>
    <property type="project" value="UniProtKB-SubCell"/>
</dbReference>
<dbReference type="GO" id="GO:0098992">
    <property type="term" value="C:neuronal dense core vesicle"/>
    <property type="evidence" value="ECO:0000266"/>
    <property type="project" value="RGD"/>
</dbReference>
<dbReference type="GO" id="GO:0005886">
    <property type="term" value="C:plasma membrane"/>
    <property type="evidence" value="ECO:0000266"/>
    <property type="project" value="RGD"/>
</dbReference>
<dbReference type="GO" id="GO:1990851">
    <property type="term" value="C:Wnt-Frizzled-LRP5/6 complex"/>
    <property type="evidence" value="ECO:0000266"/>
    <property type="project" value="RGD"/>
</dbReference>
<dbReference type="GO" id="GO:0004930">
    <property type="term" value="F:G protein-coupled receptor activity"/>
    <property type="evidence" value="ECO:0007669"/>
    <property type="project" value="UniProtKB-KW"/>
</dbReference>
<dbReference type="GO" id="GO:0030165">
    <property type="term" value="F:PDZ domain binding"/>
    <property type="evidence" value="ECO:0000266"/>
    <property type="project" value="RGD"/>
</dbReference>
<dbReference type="GO" id="GO:0005102">
    <property type="term" value="F:signaling receptor binding"/>
    <property type="evidence" value="ECO:0000266"/>
    <property type="project" value="RGD"/>
</dbReference>
<dbReference type="GO" id="GO:0031625">
    <property type="term" value="F:ubiquitin protein ligase binding"/>
    <property type="evidence" value="ECO:0000266"/>
    <property type="project" value="RGD"/>
</dbReference>
<dbReference type="GO" id="GO:0042813">
    <property type="term" value="F:Wnt receptor activity"/>
    <property type="evidence" value="ECO:0000266"/>
    <property type="project" value="RGD"/>
</dbReference>
<dbReference type="GO" id="GO:0017147">
    <property type="term" value="F:Wnt-protein binding"/>
    <property type="evidence" value="ECO:0000266"/>
    <property type="project" value="RGD"/>
</dbReference>
<dbReference type="GO" id="GO:0001525">
    <property type="term" value="P:angiogenesis"/>
    <property type="evidence" value="ECO:0000266"/>
    <property type="project" value="RGD"/>
</dbReference>
<dbReference type="GO" id="GO:0060070">
    <property type="term" value="P:canonical Wnt signaling pathway"/>
    <property type="evidence" value="ECO:0000266"/>
    <property type="project" value="RGD"/>
</dbReference>
<dbReference type="GO" id="GO:0035567">
    <property type="term" value="P:non-canonical Wnt signaling pathway"/>
    <property type="evidence" value="ECO:0000318"/>
    <property type="project" value="GO_Central"/>
</dbReference>
<dbReference type="GO" id="GO:0033077">
    <property type="term" value="P:T cell differentiation in thymus"/>
    <property type="evidence" value="ECO:0000266"/>
    <property type="project" value="RGD"/>
</dbReference>
<dbReference type="GO" id="GO:0016055">
    <property type="term" value="P:Wnt signaling pathway"/>
    <property type="evidence" value="ECO:0000266"/>
    <property type="project" value="RGD"/>
</dbReference>
<dbReference type="CDD" id="cd15250">
    <property type="entry name" value="7tmF_FZD8"/>
    <property type="match status" value="1"/>
</dbReference>
<dbReference type="CDD" id="cd07461">
    <property type="entry name" value="CRD_FZ8"/>
    <property type="match status" value="1"/>
</dbReference>
<dbReference type="FunFam" id="1.10.2000.10:FF:000004">
    <property type="entry name" value="Frizzled class receptor 8a"/>
    <property type="match status" value="1"/>
</dbReference>
<dbReference type="Gene3D" id="1.10.2000.10">
    <property type="entry name" value="Frizzled cysteine-rich domain"/>
    <property type="match status" value="1"/>
</dbReference>
<dbReference type="Gene3D" id="1.20.1070.10">
    <property type="entry name" value="Rhodopsin 7-helix transmembrane proteins"/>
    <property type="match status" value="1"/>
</dbReference>
<dbReference type="InterPro" id="IPR015526">
    <property type="entry name" value="Frizzled/SFRP"/>
</dbReference>
<dbReference type="InterPro" id="IPR000539">
    <property type="entry name" value="Frizzled/Smoothened_7TM"/>
</dbReference>
<dbReference type="InterPro" id="IPR020067">
    <property type="entry name" value="Frizzled_dom"/>
</dbReference>
<dbReference type="InterPro" id="IPR036790">
    <property type="entry name" value="Frizzled_dom_sf"/>
</dbReference>
<dbReference type="InterPro" id="IPR041776">
    <property type="entry name" value="FZ8_CRD"/>
</dbReference>
<dbReference type="InterPro" id="IPR017981">
    <property type="entry name" value="GPCR_2-like_7TM"/>
</dbReference>
<dbReference type="PANTHER" id="PTHR11309">
    <property type="entry name" value="FRIZZLED"/>
    <property type="match status" value="1"/>
</dbReference>
<dbReference type="PANTHER" id="PTHR11309:SF90">
    <property type="entry name" value="FRIZZLED-8"/>
    <property type="match status" value="1"/>
</dbReference>
<dbReference type="Pfam" id="PF01534">
    <property type="entry name" value="Frizzled"/>
    <property type="match status" value="1"/>
</dbReference>
<dbReference type="Pfam" id="PF01392">
    <property type="entry name" value="Fz"/>
    <property type="match status" value="1"/>
</dbReference>
<dbReference type="PRINTS" id="PR00489">
    <property type="entry name" value="FRIZZLED"/>
</dbReference>
<dbReference type="SMART" id="SM00063">
    <property type="entry name" value="FRI"/>
    <property type="match status" value="1"/>
</dbReference>
<dbReference type="SMART" id="SM01330">
    <property type="entry name" value="Frizzled"/>
    <property type="match status" value="1"/>
</dbReference>
<dbReference type="SUPFAM" id="SSF63501">
    <property type="entry name" value="Frizzled cysteine-rich domain"/>
    <property type="match status" value="1"/>
</dbReference>
<dbReference type="PROSITE" id="PS50038">
    <property type="entry name" value="FZ"/>
    <property type="match status" value="1"/>
</dbReference>
<dbReference type="PROSITE" id="PS50261">
    <property type="entry name" value="G_PROTEIN_RECEP_F2_4"/>
    <property type="match status" value="1"/>
</dbReference>